<organism>
    <name type="scientific">Vibrio vulnificus (strain YJ016)</name>
    <dbReference type="NCBI Taxonomy" id="196600"/>
    <lineage>
        <taxon>Bacteria</taxon>
        <taxon>Pseudomonadati</taxon>
        <taxon>Pseudomonadota</taxon>
        <taxon>Gammaproteobacteria</taxon>
        <taxon>Vibrionales</taxon>
        <taxon>Vibrionaceae</taxon>
        <taxon>Vibrio</taxon>
    </lineage>
</organism>
<proteinExistence type="inferred from homology"/>
<sequence length="181" mass="19574">MTTNTIAQIQASIKSIPDYPKPGILFRDVTSLLEDAQAYQATIQLLVDKYKDMGFTKVVGTEARGFLFGAPLALQLGVGFVPVRKPGKLPRNTIAQSYELEYGVDTLEIHTDAIVEGDKVLVVDDLLATGGTIEATTKLIRQLGGVVEHAAFVINLPEIGGDKRLEGLGLNVYSICEFEGH</sequence>
<keyword id="KW-0963">Cytoplasm</keyword>
<keyword id="KW-0328">Glycosyltransferase</keyword>
<keyword id="KW-0660">Purine salvage</keyword>
<keyword id="KW-0808">Transferase</keyword>
<comment type="function">
    <text evidence="1">Catalyzes a salvage reaction resulting in the formation of AMP, that is energically less costly than de novo synthesis.</text>
</comment>
<comment type="catalytic activity">
    <reaction evidence="1">
        <text>AMP + diphosphate = 5-phospho-alpha-D-ribose 1-diphosphate + adenine</text>
        <dbReference type="Rhea" id="RHEA:16609"/>
        <dbReference type="ChEBI" id="CHEBI:16708"/>
        <dbReference type="ChEBI" id="CHEBI:33019"/>
        <dbReference type="ChEBI" id="CHEBI:58017"/>
        <dbReference type="ChEBI" id="CHEBI:456215"/>
        <dbReference type="EC" id="2.4.2.7"/>
    </reaction>
</comment>
<comment type="pathway">
    <text evidence="1">Purine metabolism; AMP biosynthesis via salvage pathway; AMP from adenine: step 1/1.</text>
</comment>
<comment type="subunit">
    <text evidence="1">Homodimer.</text>
</comment>
<comment type="subcellular location">
    <subcellularLocation>
        <location evidence="1">Cytoplasm</location>
    </subcellularLocation>
</comment>
<comment type="similarity">
    <text evidence="1">Belongs to the purine/pyrimidine phosphoribosyltransferase family.</text>
</comment>
<feature type="chain" id="PRO_0000149487" description="Adenine phosphoribosyltransferase">
    <location>
        <begin position="1"/>
        <end position="181"/>
    </location>
</feature>
<gene>
    <name evidence="1" type="primary">apt</name>
    <name type="ordered locus">VV2412</name>
</gene>
<reference key="1">
    <citation type="journal article" date="2003" name="Genome Res.">
        <title>Comparative genome analysis of Vibrio vulnificus, a marine pathogen.</title>
        <authorList>
            <person name="Chen C.-Y."/>
            <person name="Wu K.-M."/>
            <person name="Chang Y.-C."/>
            <person name="Chang C.-H."/>
            <person name="Tsai H.-C."/>
            <person name="Liao T.-L."/>
            <person name="Liu Y.-M."/>
            <person name="Chen H.-J."/>
            <person name="Shen A.B.-T."/>
            <person name="Li J.-C."/>
            <person name="Su T.-L."/>
            <person name="Shao C.-P."/>
            <person name="Lee C.-T."/>
            <person name="Hor L.-I."/>
            <person name="Tsai S.-F."/>
        </authorList>
    </citation>
    <scope>NUCLEOTIDE SEQUENCE [LARGE SCALE GENOMIC DNA]</scope>
    <source>
        <strain>YJ016</strain>
    </source>
</reference>
<evidence type="ECO:0000255" key="1">
    <source>
        <dbReference type="HAMAP-Rule" id="MF_00004"/>
    </source>
</evidence>
<dbReference type="EC" id="2.4.2.7" evidence="1"/>
<dbReference type="EMBL" id="BA000037">
    <property type="protein sequence ID" value="BAC95176.1"/>
    <property type="molecule type" value="Genomic_DNA"/>
</dbReference>
<dbReference type="RefSeq" id="WP_011079898.1">
    <property type="nucleotide sequence ID" value="NC_005139.1"/>
</dbReference>
<dbReference type="SMR" id="Q7MIV1"/>
<dbReference type="STRING" id="672.VV93_v1c21190"/>
<dbReference type="GeneID" id="93896221"/>
<dbReference type="KEGG" id="vvy:VV2412"/>
<dbReference type="eggNOG" id="COG0503">
    <property type="taxonomic scope" value="Bacteria"/>
</dbReference>
<dbReference type="HOGENOM" id="CLU_063339_3_0_6"/>
<dbReference type="UniPathway" id="UPA00588">
    <property type="reaction ID" value="UER00646"/>
</dbReference>
<dbReference type="Proteomes" id="UP000002675">
    <property type="component" value="Chromosome I"/>
</dbReference>
<dbReference type="GO" id="GO:0005737">
    <property type="term" value="C:cytoplasm"/>
    <property type="evidence" value="ECO:0007669"/>
    <property type="project" value="UniProtKB-SubCell"/>
</dbReference>
<dbReference type="GO" id="GO:0002055">
    <property type="term" value="F:adenine binding"/>
    <property type="evidence" value="ECO:0007669"/>
    <property type="project" value="TreeGrafter"/>
</dbReference>
<dbReference type="GO" id="GO:0003999">
    <property type="term" value="F:adenine phosphoribosyltransferase activity"/>
    <property type="evidence" value="ECO:0007669"/>
    <property type="project" value="UniProtKB-UniRule"/>
</dbReference>
<dbReference type="GO" id="GO:0016208">
    <property type="term" value="F:AMP binding"/>
    <property type="evidence" value="ECO:0007669"/>
    <property type="project" value="TreeGrafter"/>
</dbReference>
<dbReference type="GO" id="GO:0006168">
    <property type="term" value="P:adenine salvage"/>
    <property type="evidence" value="ECO:0007669"/>
    <property type="project" value="InterPro"/>
</dbReference>
<dbReference type="GO" id="GO:0044209">
    <property type="term" value="P:AMP salvage"/>
    <property type="evidence" value="ECO:0007669"/>
    <property type="project" value="UniProtKB-UniRule"/>
</dbReference>
<dbReference type="GO" id="GO:0006166">
    <property type="term" value="P:purine ribonucleoside salvage"/>
    <property type="evidence" value="ECO:0007669"/>
    <property type="project" value="UniProtKB-KW"/>
</dbReference>
<dbReference type="CDD" id="cd06223">
    <property type="entry name" value="PRTases_typeI"/>
    <property type="match status" value="1"/>
</dbReference>
<dbReference type="FunFam" id="3.40.50.2020:FF:000004">
    <property type="entry name" value="Adenine phosphoribosyltransferase"/>
    <property type="match status" value="1"/>
</dbReference>
<dbReference type="Gene3D" id="3.40.50.2020">
    <property type="match status" value="1"/>
</dbReference>
<dbReference type="HAMAP" id="MF_00004">
    <property type="entry name" value="Aden_phosphoribosyltr"/>
    <property type="match status" value="1"/>
</dbReference>
<dbReference type="InterPro" id="IPR005764">
    <property type="entry name" value="Ade_phspho_trans"/>
</dbReference>
<dbReference type="InterPro" id="IPR000836">
    <property type="entry name" value="PRibTrfase_dom"/>
</dbReference>
<dbReference type="InterPro" id="IPR029057">
    <property type="entry name" value="PRTase-like"/>
</dbReference>
<dbReference type="InterPro" id="IPR050054">
    <property type="entry name" value="UPRTase/APRTase"/>
</dbReference>
<dbReference type="NCBIfam" id="TIGR01090">
    <property type="entry name" value="apt"/>
    <property type="match status" value="1"/>
</dbReference>
<dbReference type="NCBIfam" id="NF002632">
    <property type="entry name" value="PRK02304.1-1"/>
    <property type="match status" value="1"/>
</dbReference>
<dbReference type="NCBIfam" id="NF002634">
    <property type="entry name" value="PRK02304.1-3"/>
    <property type="match status" value="1"/>
</dbReference>
<dbReference type="NCBIfam" id="NF002636">
    <property type="entry name" value="PRK02304.1-5"/>
    <property type="match status" value="1"/>
</dbReference>
<dbReference type="PANTHER" id="PTHR32315">
    <property type="entry name" value="ADENINE PHOSPHORIBOSYLTRANSFERASE"/>
    <property type="match status" value="1"/>
</dbReference>
<dbReference type="PANTHER" id="PTHR32315:SF3">
    <property type="entry name" value="ADENINE PHOSPHORIBOSYLTRANSFERASE"/>
    <property type="match status" value="1"/>
</dbReference>
<dbReference type="Pfam" id="PF00156">
    <property type="entry name" value="Pribosyltran"/>
    <property type="match status" value="1"/>
</dbReference>
<dbReference type="SUPFAM" id="SSF53271">
    <property type="entry name" value="PRTase-like"/>
    <property type="match status" value="1"/>
</dbReference>
<dbReference type="PROSITE" id="PS00103">
    <property type="entry name" value="PUR_PYR_PR_TRANSFER"/>
    <property type="match status" value="1"/>
</dbReference>
<protein>
    <recommendedName>
        <fullName evidence="1">Adenine phosphoribosyltransferase</fullName>
        <shortName evidence="1">APRT</shortName>
        <ecNumber evidence="1">2.4.2.7</ecNumber>
    </recommendedName>
</protein>
<accession>Q7MIV1</accession>
<name>APT_VIBVY</name>